<proteinExistence type="inferred from homology"/>
<comment type="function">
    <text evidence="1">Essential for the anterograde spread of the infection throughout the host nervous system. Together with the gE/gI heterodimer, US9 is involved in the sorting and transport of viral structural components toward axon tips (By similarity).</text>
</comment>
<comment type="subcellular location">
    <subcellularLocation>
        <location evidence="1">Virion membrane</location>
        <topology evidence="1">Single-pass type II membrane protein</topology>
    </subcellularLocation>
    <subcellularLocation>
        <location evidence="1">Host Golgi apparatus membrane</location>
        <topology evidence="1">Single-pass type II membrane protein</topology>
    </subcellularLocation>
    <subcellularLocation>
        <location evidence="1">Host smooth endoplasmic reticulum membrane</location>
        <topology evidence="1">Single-pass type II membrane protein</topology>
    </subcellularLocation>
    <subcellularLocation>
        <location evidence="3">Host cell membrane</location>
        <topology evidence="3">Single-pass type II membrane protein</topology>
    </subcellularLocation>
    <text>During virion morphogenesis, this protein probably accumulates in the endosomes and trans-Golgi where secondary envelopment occurs. It is probably transported to the cell surface from where it is endocytosed and directed to the trans-Golgi network (TGN), maybe through an interaction with PACS-1 sorting protein.</text>
</comment>
<comment type="PTM">
    <text evidence="3">Phosphorylated on serines within the acidic cluster, possibly by host CK2. Phosphorylation determines whether endocytosed viral US9 traffics to the trans-Golgi network or recycles to the cell membrane.</text>
</comment>
<comment type="similarity">
    <text evidence="3">Belongs to the alphaherpesvirinae envelope protein US9 family.</text>
</comment>
<protein>
    <recommendedName>
        <fullName>Envelope protein US9</fullName>
    </recommendedName>
    <alternativeName>
        <fullName>Envelope protein 65</fullName>
    </alternativeName>
    <alternativeName>
        <fullName>ORF65 protein</fullName>
    </alternativeName>
</protein>
<evidence type="ECO:0000250" key="1"/>
<evidence type="ECO:0000255" key="2"/>
<evidence type="ECO:0000305" key="3"/>
<gene>
    <name type="ORF">ORF65</name>
</gene>
<reference key="1">
    <citation type="journal article" date="2000" name="J. Infect. Dis.">
        <title>Nucleotide sequences that distinguish Oka vaccine from parental Oka and other varicella-zoster virus isolates.</title>
        <authorList>
            <person name="Argaw T."/>
            <person name="Cohen J.I."/>
            <person name="Klutch M."/>
            <person name="Lekstrom K."/>
            <person name="Yoshikawa T."/>
            <person name="Asano Y."/>
            <person name="Krause P.R."/>
        </authorList>
    </citation>
    <scope>NUCLEOTIDE SEQUENCE [GENOMIC DNA]</scope>
    <source>
        <strain>V-Oka(Biken)</strain>
    </source>
</reference>
<reference key="2">
    <citation type="journal article" date="2001" name="Virology">
        <title>Identification and mapping of single nucleotide polymorphisms in the varicella-zoster virus genome.</title>
        <authorList>
            <person name="Faga B."/>
            <person name="Maury W."/>
            <person name="Bruckner D.A."/>
            <person name="Grose C."/>
        </authorList>
    </citation>
    <scope>NUCLEOTIDE SEQUENCE [GENOMIC DNA]</scope>
    <source>
        <strain>Oka varicella vaccine Biken (V-Oka-Biken)</strain>
    </source>
</reference>
<reference key="3">
    <citation type="journal article" date="2002" name="J. Virol.">
        <title>Comparison of the complete DNA sequences of the Oka varicella vaccine and its parental virus.</title>
        <authorList>
            <person name="Gomi Y."/>
            <person name="Sunamachi H."/>
            <person name="Mori Y."/>
            <person name="Nagaike K."/>
            <person name="Takahashi M."/>
            <person name="Yamanishi K."/>
        </authorList>
    </citation>
    <scope>NUCLEOTIDE SEQUENCE [LARGE SCALE GENOMIC DNA]</scope>
    <source>
        <strain>Isolate Human/Japan/P-Oka/1970</strain>
        <strain>Oka varicella vaccine Biken (V-Oka-Biken)</strain>
    </source>
</reference>
<reference key="4">
    <citation type="journal article" date="2008" name="J. Virol.">
        <title>Complete DNA sequences of two oka strain varicella-zoster virus genomes.</title>
        <authorList>
            <person name="Tillieux S.L."/>
            <person name="Halsey W.S."/>
            <person name="Thomas E.S."/>
            <person name="Voycik J.J."/>
            <person name="Sathe G.M."/>
            <person name="Vassilev V."/>
        </authorList>
    </citation>
    <scope>NUCLEOTIDE SEQUENCE [LARGE SCALE GENOMIC DNA]</scope>
    <source>
        <strain>Oka varicella vaccine VarilRix (V-Oka-GSK)</strain>
        <strain>Oka varicella vaccine Varivax (V-Oka-Merck)</strain>
    </source>
</reference>
<sequence length="102" mass="11436">MAGQNTMEGEAVALLMEAVVTPRAQPNNTTITAIQPSRSAEKCYYSDSENETADEFLRRIGKYQHKIYHRKKFCYITLIIVFVFAMTGAAFALGYITSQFVG</sequence>
<feature type="chain" id="PRO_0000385485" description="Envelope protein US9">
    <location>
        <begin position="1"/>
        <end position="102"/>
    </location>
</feature>
<feature type="topological domain" description="Intravirion" evidence="1">
    <location>
        <begin position="1"/>
        <end position="75"/>
    </location>
</feature>
<feature type="transmembrane region" description="Helical; Signal-anchor for type II membrane protein" evidence="1">
    <location>
        <begin position="76"/>
        <end position="96"/>
    </location>
</feature>
<feature type="topological domain" description="Virion surface" evidence="1">
    <location>
        <begin position="97"/>
        <end position="102"/>
    </location>
</feature>
<feature type="region of interest" description="Acidic">
    <location>
        <begin position="41"/>
        <end position="55"/>
    </location>
</feature>
<feature type="short sequence motif" description="Di-leucine internalization motif" evidence="2">
    <location>
        <begin position="14"/>
        <end position="15"/>
    </location>
</feature>
<feature type="modified residue" description="Phosphoserine; by host CK2" evidence="2">
    <location>
        <position position="46"/>
    </location>
</feature>
<feature type="modified residue" description="Phosphoserine; by host CK2" evidence="2">
    <location>
        <position position="48"/>
    </location>
</feature>
<dbReference type="EMBL" id="AF206304">
    <property type="protein sequence ID" value="AAF61666.1"/>
    <property type="molecule type" value="Genomic_DNA"/>
</dbReference>
<dbReference type="EMBL" id="AH010548">
    <property type="protein sequence ID" value="AAK19943.1"/>
    <property type="molecule type" value="Genomic_DNA"/>
</dbReference>
<dbReference type="EMBL" id="AB097932">
    <property type="status" value="NOT_ANNOTATED_CDS"/>
    <property type="molecule type" value="Genomic_DNA"/>
</dbReference>
<dbReference type="EMBL" id="AB097933">
    <property type="status" value="NOT_ANNOTATED_CDS"/>
    <property type="molecule type" value="Genomic_DNA"/>
</dbReference>
<dbReference type="EMBL" id="DQ008354">
    <property type="protein sequence ID" value="AAY57674.1"/>
    <property type="molecule type" value="Genomic_DNA"/>
</dbReference>
<dbReference type="EMBL" id="DQ008355">
    <property type="protein sequence ID" value="AAY57745.1"/>
    <property type="molecule type" value="Genomic_DNA"/>
</dbReference>
<dbReference type="RefSeq" id="NP_040187.1">
    <property type="nucleotide sequence ID" value="NC_001348.1"/>
</dbReference>
<dbReference type="IntAct" id="Q77NN6">
    <property type="interactions" value="15"/>
</dbReference>
<dbReference type="GeneID" id="1487702"/>
<dbReference type="KEGG" id="vg:1487702"/>
<dbReference type="Proteomes" id="UP000002603">
    <property type="component" value="Genome"/>
</dbReference>
<dbReference type="Proteomes" id="UP000008504">
    <property type="component" value="Genome"/>
</dbReference>
<dbReference type="Proteomes" id="UP000008505">
    <property type="component" value="Genome"/>
</dbReference>
<dbReference type="Proteomes" id="UP000008506">
    <property type="component" value="Genome"/>
</dbReference>
<dbReference type="GO" id="GO:0043657">
    <property type="term" value="C:host cell"/>
    <property type="evidence" value="ECO:0007669"/>
    <property type="project" value="GOC"/>
</dbReference>
<dbReference type="GO" id="GO:0044178">
    <property type="term" value="C:host cell Golgi membrane"/>
    <property type="evidence" value="ECO:0007669"/>
    <property type="project" value="UniProtKB-SubCell"/>
</dbReference>
<dbReference type="GO" id="GO:0020002">
    <property type="term" value="C:host cell plasma membrane"/>
    <property type="evidence" value="ECO:0007669"/>
    <property type="project" value="UniProtKB-SubCell"/>
</dbReference>
<dbReference type="GO" id="GO:0044171">
    <property type="term" value="C:host cell smooth endoplasmic reticulum membrane"/>
    <property type="evidence" value="ECO:0007669"/>
    <property type="project" value="UniProtKB-SubCell"/>
</dbReference>
<dbReference type="GO" id="GO:0016020">
    <property type="term" value="C:membrane"/>
    <property type="evidence" value="ECO:0007669"/>
    <property type="project" value="UniProtKB-KW"/>
</dbReference>
<dbReference type="GO" id="GO:0019031">
    <property type="term" value="C:viral envelope"/>
    <property type="evidence" value="ECO:0007669"/>
    <property type="project" value="UniProtKB-KW"/>
</dbReference>
<dbReference type="GO" id="GO:0055036">
    <property type="term" value="C:virion membrane"/>
    <property type="evidence" value="ECO:0007669"/>
    <property type="project" value="UniProtKB-SubCell"/>
</dbReference>
<dbReference type="GO" id="GO:0075733">
    <property type="term" value="P:intracellular transport of virus"/>
    <property type="evidence" value="ECO:0007669"/>
    <property type="project" value="InterPro"/>
</dbReference>
<dbReference type="InterPro" id="IPR009278">
    <property type="entry name" value="Herpes_US9"/>
</dbReference>
<dbReference type="Pfam" id="PF06072">
    <property type="entry name" value="Herpes_US9"/>
    <property type="match status" value="1"/>
</dbReference>
<organism>
    <name type="scientific">Varicella-zoster virus (strain Oka vaccine)</name>
    <name type="common">HHV-3</name>
    <name type="synonym">Human herpesvirus 3</name>
    <dbReference type="NCBI Taxonomy" id="341980"/>
    <lineage>
        <taxon>Viruses</taxon>
        <taxon>Duplodnaviria</taxon>
        <taxon>Heunggongvirae</taxon>
        <taxon>Peploviricota</taxon>
        <taxon>Herviviricetes</taxon>
        <taxon>Herpesvirales</taxon>
        <taxon>Orthoherpesviridae</taxon>
        <taxon>Alphaherpesvirinae</taxon>
        <taxon>Varicellovirus</taxon>
        <taxon>Varicellovirus humanalpha3</taxon>
        <taxon>Human herpesvirus 3</taxon>
    </lineage>
</organism>
<keyword id="KW-1032">Host cell membrane</keyword>
<keyword id="KW-1038">Host endoplasmic reticulum</keyword>
<keyword id="KW-1040">Host Golgi apparatus</keyword>
<keyword id="KW-1043">Host membrane</keyword>
<keyword id="KW-0472">Membrane</keyword>
<keyword id="KW-0597">Phosphoprotein</keyword>
<keyword id="KW-0735">Signal-anchor</keyword>
<keyword id="KW-0812">Transmembrane</keyword>
<keyword id="KW-1133">Transmembrane helix</keyword>
<keyword id="KW-0261">Viral envelope protein</keyword>
<keyword id="KW-0946">Virion</keyword>
<accession>Q77NN6</accession>
<name>US9_VZVO</name>
<organismHost>
    <name type="scientific">Homo sapiens</name>
    <name type="common">Human</name>
    <dbReference type="NCBI Taxonomy" id="9606"/>
</organismHost>